<dbReference type="EMBL" id="CM002238">
    <property type="protein sequence ID" value="EAA27899.1"/>
    <property type="molecule type" value="Genomic_DNA"/>
</dbReference>
<dbReference type="RefSeq" id="XP_957135.1">
    <property type="nucleotide sequence ID" value="XM_952042.3"/>
</dbReference>
<dbReference type="FunCoup" id="Q7RYI0">
    <property type="interactions" value="81"/>
</dbReference>
<dbReference type="STRING" id="367110.Q7RYI0"/>
<dbReference type="PaxDb" id="5141-EFNCRP00000006220"/>
<dbReference type="EnsemblFungi" id="EAA27899">
    <property type="protein sequence ID" value="EAA27899"/>
    <property type="gene ID" value="NCU06495"/>
</dbReference>
<dbReference type="GeneID" id="3873273"/>
<dbReference type="KEGG" id="ncr:NCU06495"/>
<dbReference type="VEuPathDB" id="FungiDB:NCU06495"/>
<dbReference type="HOGENOM" id="CLU_068905_1_0_1"/>
<dbReference type="InParanoid" id="Q7RYI0"/>
<dbReference type="OMA" id="SNCRHDL"/>
<dbReference type="OrthoDB" id="1916310at2759"/>
<dbReference type="Proteomes" id="UP000001805">
    <property type="component" value="Chromosome 3, Linkage Group III"/>
</dbReference>
<dbReference type="GO" id="GO:0061617">
    <property type="term" value="C:MICOS complex"/>
    <property type="evidence" value="ECO:0007669"/>
    <property type="project" value="EnsemblFungi"/>
</dbReference>
<dbReference type="GO" id="GO:0044284">
    <property type="term" value="C:mitochondrial crista junction"/>
    <property type="evidence" value="ECO:0007669"/>
    <property type="project" value="EnsemblFungi"/>
</dbReference>
<dbReference type="GO" id="GO:0005739">
    <property type="term" value="C:mitochondrion"/>
    <property type="evidence" value="ECO:0000318"/>
    <property type="project" value="GO_Central"/>
</dbReference>
<dbReference type="GO" id="GO:0042407">
    <property type="term" value="P:cristae formation"/>
    <property type="evidence" value="ECO:0007669"/>
    <property type="project" value="EnsemblFungi"/>
</dbReference>
<dbReference type="InterPro" id="IPR007512">
    <property type="entry name" value="Mic10"/>
</dbReference>
<dbReference type="PANTHER" id="PTHR21304">
    <property type="entry name" value="MICOS COMPLEX SUBUNIT MIC10"/>
    <property type="match status" value="1"/>
</dbReference>
<dbReference type="PANTHER" id="PTHR21304:SF0">
    <property type="entry name" value="MICOS COMPLEX SUBUNIT MIC10"/>
    <property type="match status" value="1"/>
</dbReference>
<dbReference type="Pfam" id="PF04418">
    <property type="entry name" value="DUF543"/>
    <property type="match status" value="1"/>
</dbReference>
<keyword id="KW-0472">Membrane</keyword>
<keyword id="KW-0496">Mitochondrion</keyword>
<keyword id="KW-0999">Mitochondrion inner membrane</keyword>
<keyword id="KW-1185">Reference proteome</keyword>
<keyword id="KW-0812">Transmembrane</keyword>
<keyword id="KW-1133">Transmembrane helix</keyword>
<evidence type="ECO:0000250" key="1"/>
<evidence type="ECO:0000255" key="2"/>
<evidence type="ECO:0000305" key="3"/>
<accession>Q7RYI0</accession>
<sequence>MSDSTSSPVAAAPSTAMTRPVSEALLNEKWDRCLSNLLIKSTLGLGFGVVFSVLIFKRRAWPAFVGVGFGAGRAYEECNTSLKQAAREIRAQA</sequence>
<gene>
    <name type="primary">mic10</name>
    <name type="ORF">NCU06495</name>
</gene>
<reference key="1">
    <citation type="journal article" date="2003" name="Nature">
        <title>The genome sequence of the filamentous fungus Neurospora crassa.</title>
        <authorList>
            <person name="Galagan J.E."/>
            <person name="Calvo S.E."/>
            <person name="Borkovich K.A."/>
            <person name="Selker E.U."/>
            <person name="Read N.D."/>
            <person name="Jaffe D.B."/>
            <person name="FitzHugh W."/>
            <person name="Ma L.-J."/>
            <person name="Smirnov S."/>
            <person name="Purcell S."/>
            <person name="Rehman B."/>
            <person name="Elkins T."/>
            <person name="Engels R."/>
            <person name="Wang S."/>
            <person name="Nielsen C.B."/>
            <person name="Butler J."/>
            <person name="Endrizzi M."/>
            <person name="Qui D."/>
            <person name="Ianakiev P."/>
            <person name="Bell-Pedersen D."/>
            <person name="Nelson M.A."/>
            <person name="Werner-Washburne M."/>
            <person name="Selitrennikoff C.P."/>
            <person name="Kinsey J.A."/>
            <person name="Braun E.L."/>
            <person name="Zelter A."/>
            <person name="Schulte U."/>
            <person name="Kothe G.O."/>
            <person name="Jedd G."/>
            <person name="Mewes H.-W."/>
            <person name="Staben C."/>
            <person name="Marcotte E."/>
            <person name="Greenberg D."/>
            <person name="Roy A."/>
            <person name="Foley K."/>
            <person name="Naylor J."/>
            <person name="Stange-Thomann N."/>
            <person name="Barrett R."/>
            <person name="Gnerre S."/>
            <person name="Kamal M."/>
            <person name="Kamvysselis M."/>
            <person name="Mauceli E.W."/>
            <person name="Bielke C."/>
            <person name="Rudd S."/>
            <person name="Frishman D."/>
            <person name="Krystofova S."/>
            <person name="Rasmussen C."/>
            <person name="Metzenberg R.L."/>
            <person name="Perkins D.D."/>
            <person name="Kroken S."/>
            <person name="Cogoni C."/>
            <person name="Macino G."/>
            <person name="Catcheside D.E.A."/>
            <person name="Li W."/>
            <person name="Pratt R.J."/>
            <person name="Osmani S.A."/>
            <person name="DeSouza C.P.C."/>
            <person name="Glass N.L."/>
            <person name="Orbach M.J."/>
            <person name="Berglund J.A."/>
            <person name="Voelker R."/>
            <person name="Yarden O."/>
            <person name="Plamann M."/>
            <person name="Seiler S."/>
            <person name="Dunlap J.C."/>
            <person name="Radford A."/>
            <person name="Aramayo R."/>
            <person name="Natvig D.O."/>
            <person name="Alex L.A."/>
            <person name="Mannhaupt G."/>
            <person name="Ebbole D.J."/>
            <person name="Freitag M."/>
            <person name="Paulsen I."/>
            <person name="Sachs M.S."/>
            <person name="Lander E.S."/>
            <person name="Nusbaum C."/>
            <person name="Birren B.W."/>
        </authorList>
    </citation>
    <scope>NUCLEOTIDE SEQUENCE [LARGE SCALE GENOMIC DNA]</scope>
    <source>
        <strain>ATCC 24698 / 74-OR23-1A / CBS 708.71 / DSM 1257 / FGSC 987</strain>
    </source>
</reference>
<name>MIC10_NEUCR</name>
<protein>
    <recommendedName>
        <fullName>MICOS complex subunit mic10</fullName>
    </recommendedName>
    <alternativeName>
        <fullName>Mitochondrial inner membrane organizing system protein 1</fullName>
    </alternativeName>
</protein>
<comment type="function">
    <text evidence="1">Component of the MICOS complex, a large protein complex of the mitochondrial inner membrane that plays crucial roles in the maintenance of crista junctions, inner membrane architecture, and formation of contact sites to the outer membrane.</text>
</comment>
<comment type="subunit">
    <text evidence="1">Component of the mitochondrial contact site and cristae organizing system (MICOS) complex.</text>
</comment>
<comment type="subcellular location">
    <subcellularLocation>
        <location evidence="1">Mitochondrion inner membrane</location>
        <topology evidence="1">Single-pass membrane protein</topology>
    </subcellularLocation>
    <text evidence="1">The C-terminus is located in the intermembrane space, while the location of the N-terminus has not been determined yet.</text>
</comment>
<comment type="similarity">
    <text evidence="3">Belongs to the MICOS complex subunit Mic10 family.</text>
</comment>
<proteinExistence type="inferred from homology"/>
<organism>
    <name type="scientific">Neurospora crassa (strain ATCC 24698 / 74-OR23-1A / CBS 708.71 / DSM 1257 / FGSC 987)</name>
    <dbReference type="NCBI Taxonomy" id="367110"/>
    <lineage>
        <taxon>Eukaryota</taxon>
        <taxon>Fungi</taxon>
        <taxon>Dikarya</taxon>
        <taxon>Ascomycota</taxon>
        <taxon>Pezizomycotina</taxon>
        <taxon>Sordariomycetes</taxon>
        <taxon>Sordariomycetidae</taxon>
        <taxon>Sordariales</taxon>
        <taxon>Sordariaceae</taxon>
        <taxon>Neurospora</taxon>
    </lineage>
</organism>
<feature type="chain" id="PRO_0000221638" description="MICOS complex subunit mic10">
    <location>
        <begin position="1"/>
        <end position="93"/>
    </location>
</feature>
<feature type="transmembrane region" description="Helical" evidence="2">
    <location>
        <begin position="34"/>
        <end position="56"/>
    </location>
</feature>
<feature type="topological domain" description="Mitochondrial intermembrane" evidence="2">
    <location>
        <begin position="57"/>
        <end position="93"/>
    </location>
</feature>